<comment type="function">
    <text>After binding acetylcholine, the AChR responds by an extensive change in conformation that affects all subunits and leads to opening of an ion-conducting channel across the plasma membrane.</text>
</comment>
<comment type="catalytic activity">
    <reaction evidence="2">
        <text>K(+)(in) = K(+)(out)</text>
        <dbReference type="Rhea" id="RHEA:29463"/>
        <dbReference type="ChEBI" id="CHEBI:29103"/>
    </reaction>
</comment>
<comment type="catalytic activity">
    <reaction evidence="2">
        <text>Na(+)(in) = Na(+)(out)</text>
        <dbReference type="Rhea" id="RHEA:34963"/>
        <dbReference type="ChEBI" id="CHEBI:29101"/>
    </reaction>
</comment>
<comment type="subunit">
    <text>Pentamer of two alpha chains, and one each of the beta, delta, and gamma (in immature muscle) or epsilon (in mature muscle) chains.</text>
</comment>
<comment type="subcellular location">
    <subcellularLocation>
        <location>Postsynaptic cell membrane</location>
        <topology>Multi-pass membrane protein</topology>
    </subcellularLocation>
    <subcellularLocation>
        <location>Cell membrane</location>
        <topology>Multi-pass membrane protein</topology>
    </subcellularLocation>
</comment>
<comment type="alternative products">
    <event type="alternative splicing"/>
    <isoform>
        <id>P04760-1</id>
        <name>Long</name>
        <sequence type="displayed"/>
    </isoform>
    <isoform>
        <id>P04760-2</id>
        <name>Short</name>
        <sequence type="described" ref="VSP_000072"/>
    </isoform>
</comment>
<comment type="tissue specificity">
    <text>At least in myotubes of skeletal muscle.</text>
</comment>
<comment type="developmental stage">
    <text>Both short and long isoforms are found in a 17 days old embryo, whereas the short isoform is the only isoform present in the newborn muscle.</text>
</comment>
<comment type="similarity">
    <text evidence="5">Belongs to the ligand-gated ion channel (TC 1.A.9) family. Acetylcholine receptor (TC 1.A.9.1) subfamily. Gamma/CHRNG sub-subfamily.</text>
</comment>
<dbReference type="EMBL" id="X03818">
    <property type="protein sequence ID" value="CAA27442.1"/>
    <property type="molecule type" value="mRNA"/>
</dbReference>
<dbReference type="EMBL" id="X03819">
    <property type="protein sequence ID" value="CAA27443.1"/>
    <property type="molecule type" value="mRNA"/>
</dbReference>
<dbReference type="EMBL" id="M30514">
    <property type="protein sequence ID" value="AAB63431.1"/>
    <property type="status" value="ALT_SEQ"/>
    <property type="molecule type" value="mRNA"/>
</dbReference>
<dbReference type="EMBL" id="M27455">
    <property type="protein sequence ID" value="AAA70247.1"/>
    <property type="molecule type" value="Genomic_DNA"/>
</dbReference>
<dbReference type="EMBL" id="M22381">
    <property type="protein sequence ID" value="AAA37152.1"/>
    <property type="molecule type" value="Genomic_DNA"/>
</dbReference>
<dbReference type="EMBL" id="S77465">
    <property type="protein sequence ID" value="AAB33997.2"/>
    <property type="molecule type" value="mRNA"/>
</dbReference>
<dbReference type="CCDS" id="CCDS35651.1">
    <molecule id="P04760-1"/>
</dbReference>
<dbReference type="PIR" id="I56566">
    <property type="entry name" value="I56566"/>
</dbReference>
<dbReference type="SMR" id="P04760"/>
<dbReference type="ComplexPortal" id="CPX-252">
    <property type="entry name" value="Muscle-type nicotinic acetylcholine receptor complex, alpha1-beta1-delta-gamma"/>
</dbReference>
<dbReference type="FunCoup" id="P04760">
    <property type="interactions" value="86"/>
</dbReference>
<dbReference type="STRING" id="10090.ENSMUSP00000027470"/>
<dbReference type="BindingDB" id="P04760"/>
<dbReference type="ChEMBL" id="CHEMBL3038460"/>
<dbReference type="GlyCosmos" id="P04760">
    <property type="glycosylation" value="2 sites, No reported glycans"/>
</dbReference>
<dbReference type="GlyGen" id="P04760">
    <property type="glycosylation" value="2 sites"/>
</dbReference>
<dbReference type="PhosphoSitePlus" id="P04760"/>
<dbReference type="PaxDb" id="10090-ENSMUSP00000027470"/>
<dbReference type="AGR" id="MGI:87895"/>
<dbReference type="MGI" id="MGI:87895">
    <property type="gene designation" value="Chrng"/>
</dbReference>
<dbReference type="eggNOG" id="KOG3645">
    <property type="taxonomic scope" value="Eukaryota"/>
</dbReference>
<dbReference type="InParanoid" id="P04760"/>
<dbReference type="PhylomeDB" id="P04760"/>
<dbReference type="Reactome" id="R-MMU-629587">
    <property type="pathway name" value="Highly sodium permeable postsynaptic acetylcholine nicotinic receptors"/>
</dbReference>
<dbReference type="PRO" id="PR:P04760"/>
<dbReference type="Proteomes" id="UP000000589">
    <property type="component" value="Unplaced"/>
</dbReference>
<dbReference type="RNAct" id="P04760">
    <property type="molecule type" value="protein"/>
</dbReference>
<dbReference type="GO" id="GO:0005892">
    <property type="term" value="C:acetylcholine-gated channel complex"/>
    <property type="evidence" value="ECO:0000314"/>
    <property type="project" value="MGI"/>
</dbReference>
<dbReference type="GO" id="GO:0005886">
    <property type="term" value="C:plasma membrane"/>
    <property type="evidence" value="ECO:0000314"/>
    <property type="project" value="MGI"/>
</dbReference>
<dbReference type="GO" id="GO:0045211">
    <property type="term" value="C:postsynaptic membrane"/>
    <property type="evidence" value="ECO:0000314"/>
    <property type="project" value="MGI"/>
</dbReference>
<dbReference type="GO" id="GO:0022848">
    <property type="term" value="F:acetylcholine-gated monoatomic cation-selective channel activity"/>
    <property type="evidence" value="ECO:0000316"/>
    <property type="project" value="MGI"/>
</dbReference>
<dbReference type="GO" id="GO:0004888">
    <property type="term" value="F:transmembrane signaling receptor activity"/>
    <property type="evidence" value="ECO:0007669"/>
    <property type="project" value="InterPro"/>
</dbReference>
<dbReference type="GO" id="GO:1904315">
    <property type="term" value="F:transmitter-gated monoatomic ion channel activity involved in regulation of postsynaptic membrane potential"/>
    <property type="evidence" value="ECO:0000250"/>
    <property type="project" value="UniProtKB"/>
</dbReference>
<dbReference type="GO" id="GO:0042391">
    <property type="term" value="P:regulation of membrane potential"/>
    <property type="evidence" value="ECO:0000316"/>
    <property type="project" value="MGI"/>
</dbReference>
<dbReference type="CDD" id="cd19029">
    <property type="entry name" value="LGIC_ECD_nAChR_G"/>
    <property type="match status" value="1"/>
</dbReference>
<dbReference type="CDD" id="cd19064">
    <property type="entry name" value="LGIC_TM_nAChR"/>
    <property type="match status" value="1"/>
</dbReference>
<dbReference type="FunFam" id="1.20.58.390:FF:000010">
    <property type="entry name" value="Nicotinic acetylcholine receptor subunit epsilon"/>
    <property type="match status" value="1"/>
</dbReference>
<dbReference type="FunFam" id="1.20.58.390:FF:000036">
    <property type="entry name" value="Nicotinic acetylcholine receptor subunit gamma"/>
    <property type="match status" value="1"/>
</dbReference>
<dbReference type="FunFam" id="2.70.170.10:FF:000012">
    <property type="entry name" value="Nicotinic acetylcholine receptor subunit gamma"/>
    <property type="match status" value="1"/>
</dbReference>
<dbReference type="Gene3D" id="2.70.170.10">
    <property type="entry name" value="Neurotransmitter-gated ion-channel ligand-binding domain"/>
    <property type="match status" value="1"/>
</dbReference>
<dbReference type="Gene3D" id="1.20.58.390">
    <property type="entry name" value="Neurotransmitter-gated ion-channel transmembrane domain"/>
    <property type="match status" value="2"/>
</dbReference>
<dbReference type="InterPro" id="IPR006202">
    <property type="entry name" value="Neur_chan_lig-bd"/>
</dbReference>
<dbReference type="InterPro" id="IPR036734">
    <property type="entry name" value="Neur_chan_lig-bd_sf"/>
</dbReference>
<dbReference type="InterPro" id="IPR006201">
    <property type="entry name" value="Neur_channel"/>
</dbReference>
<dbReference type="InterPro" id="IPR036719">
    <property type="entry name" value="Neuro-gated_channel_TM_sf"/>
</dbReference>
<dbReference type="InterPro" id="IPR038050">
    <property type="entry name" value="Neuro_actylchol_rec"/>
</dbReference>
<dbReference type="InterPro" id="IPR006029">
    <property type="entry name" value="Neurotrans-gated_channel_TM"/>
</dbReference>
<dbReference type="InterPro" id="IPR018000">
    <property type="entry name" value="Neurotransmitter_ion_chnl_CS"/>
</dbReference>
<dbReference type="InterPro" id="IPR002394">
    <property type="entry name" value="Nicotinic_acetylcholine_rcpt"/>
</dbReference>
<dbReference type="PANTHER" id="PTHR18945">
    <property type="entry name" value="NEUROTRANSMITTER GATED ION CHANNEL"/>
    <property type="match status" value="1"/>
</dbReference>
<dbReference type="Pfam" id="PF02931">
    <property type="entry name" value="Neur_chan_LBD"/>
    <property type="match status" value="1"/>
</dbReference>
<dbReference type="Pfam" id="PF02932">
    <property type="entry name" value="Neur_chan_memb"/>
    <property type="match status" value="1"/>
</dbReference>
<dbReference type="PRINTS" id="PR00254">
    <property type="entry name" value="NICOTINICR"/>
</dbReference>
<dbReference type="PRINTS" id="PR00252">
    <property type="entry name" value="NRIONCHANNEL"/>
</dbReference>
<dbReference type="SUPFAM" id="SSF90112">
    <property type="entry name" value="Neurotransmitter-gated ion-channel transmembrane pore"/>
    <property type="match status" value="1"/>
</dbReference>
<dbReference type="SUPFAM" id="SSF63712">
    <property type="entry name" value="Nicotinic receptor ligand binding domain-like"/>
    <property type="match status" value="1"/>
</dbReference>
<dbReference type="PROSITE" id="PS00236">
    <property type="entry name" value="NEUROTR_ION_CHANNEL"/>
    <property type="match status" value="1"/>
</dbReference>
<feature type="signal peptide" evidence="3">
    <location>
        <begin position="1"/>
        <end position="22"/>
    </location>
</feature>
<feature type="chain" id="PRO_0000000335" description="Acetylcholine receptor subunit gamma">
    <location>
        <begin position="23"/>
        <end position="519"/>
    </location>
</feature>
<feature type="topological domain" description="Extracellular" evidence="3">
    <location>
        <begin position="23"/>
        <end position="240"/>
    </location>
</feature>
<feature type="transmembrane region" description="Helical" evidence="3">
    <location>
        <begin position="241"/>
        <end position="265"/>
    </location>
</feature>
<feature type="transmembrane region" description="Helical" evidence="3">
    <location>
        <begin position="274"/>
        <end position="292"/>
    </location>
</feature>
<feature type="transmembrane region" description="Helical" evidence="3">
    <location>
        <begin position="308"/>
        <end position="329"/>
    </location>
</feature>
<feature type="topological domain" description="Cytoplasmic" evidence="3">
    <location>
        <begin position="330"/>
        <end position="476"/>
    </location>
</feature>
<feature type="transmembrane region" description="Helical" evidence="3">
    <location>
        <begin position="477"/>
        <end position="497"/>
    </location>
</feature>
<feature type="glycosylation site" description="N-linked (GlcNAc...) asparagine" evidence="3">
    <location>
        <position position="52"/>
    </location>
</feature>
<feature type="glycosylation site" description="N-linked (GlcNAc...) asparagine" evidence="3">
    <location>
        <position position="163"/>
    </location>
</feature>
<feature type="disulfide bond" evidence="1">
    <location>
        <begin position="150"/>
        <end position="164"/>
    </location>
</feature>
<feature type="splice variant" id="VSP_000072" description="In isoform Short." evidence="4">
    <location>
        <begin position="117"/>
        <end position="168"/>
    </location>
</feature>
<feature type="sequence conflict" description="In Ref. 2; AAB63431." evidence="5" ref="2">
    <original>V</original>
    <variation>G</variation>
    <location>
        <position position="231"/>
    </location>
</feature>
<feature type="sequence conflict" description="In Ref. 2; AAB63431." evidence="5" ref="2">
    <original>L</original>
    <variation>V</variation>
    <location>
        <position position="346"/>
    </location>
</feature>
<accession>P04760</accession>
<protein>
    <recommendedName>
        <fullName>Acetylcholine receptor subunit gamma</fullName>
    </recommendedName>
</protein>
<gene>
    <name type="primary">Chrng</name>
    <name type="synonym">Acrg</name>
</gene>
<keyword id="KW-0025">Alternative splicing</keyword>
<keyword id="KW-1003">Cell membrane</keyword>
<keyword id="KW-1015">Disulfide bond</keyword>
<keyword id="KW-0325">Glycoprotein</keyword>
<keyword id="KW-0407">Ion channel</keyword>
<keyword id="KW-0406">Ion transport</keyword>
<keyword id="KW-1071">Ligand-gated ion channel</keyword>
<keyword id="KW-0472">Membrane</keyword>
<keyword id="KW-0628">Postsynaptic cell membrane</keyword>
<keyword id="KW-0675">Receptor</keyword>
<keyword id="KW-1185">Reference proteome</keyword>
<keyword id="KW-0732">Signal</keyword>
<keyword id="KW-0770">Synapse</keyword>
<keyword id="KW-0812">Transmembrane</keyword>
<keyword id="KW-1133">Transmembrane helix</keyword>
<keyword id="KW-0813">Transport</keyword>
<name>ACHG_MOUSE</name>
<reference key="1">
    <citation type="journal article" date="1986" name="Nucleic Acids Res.">
        <title>Mouse muscle nicotinic acetylcholine receptor gamma subunit: cDNA sequence and gene expression.</title>
        <authorList>
            <person name="Yu L."/>
            <person name="Lapolla R.J."/>
            <person name="Davidson N."/>
        </authorList>
    </citation>
    <scope>NUCLEOTIDE SEQUENCE [MRNA]</scope>
</reference>
<reference key="2">
    <citation type="journal article" date="1986" name="J. Neurosci. Res.">
        <title>Isolation and sequence of cDNA clones coding for the precursor to the gamma subunit of mouse muscle nicotinic acetylcholine receptor.</title>
        <authorList>
            <person name="Boulter J."/>
            <person name="Evans K."/>
            <person name="Martin G."/>
            <person name="Mason P."/>
            <person name="Stengelin S."/>
            <person name="Goldman D.J."/>
            <person name="Heinemann S.F."/>
            <person name="Patrick J."/>
        </authorList>
    </citation>
    <scope>NUCLEOTIDE SEQUENCE [MRNA]</scope>
</reference>
<reference key="3">
    <citation type="journal article" date="1987" name="Brain Res.">
        <title>Transcriptional regulation of nicotinic acetylcholine receptor genes: identification of control elements of a gamma-subunit gene.</title>
        <authorList>
            <person name="Gardner P.D."/>
            <person name="Heinemann S.F."/>
            <person name="Patrick J."/>
        </authorList>
    </citation>
    <scope>NUCLEOTIDE SEQUENCE OF 1-57</scope>
    <source>
        <tissue>Muscle</tissue>
    </source>
</reference>
<reference key="4">
    <citation type="journal article" date="1988" name="Mol. Cell. Biol.">
        <title>Stepwise activation of the mouse acetylcholine receptor delta- and gamma-subunit genes in clonal cell lines.</title>
        <authorList>
            <person name="Crowder C.M."/>
            <person name="Merlie J.P."/>
        </authorList>
    </citation>
    <scope>NUCLEOTIDE SEQUENCE [GENOMIC DNA] OF 1-18</scope>
    <source>
        <strain>BALB/cJ</strain>
    </source>
</reference>
<reference key="5">
    <citation type="journal article" date="1995" name="Proc. Natl. Acad. Sci. U.S.A.">
        <title>Two forms of acetylcholine receptor gamma subunit in mouse muscle.</title>
        <authorList>
            <person name="Mileo A.M."/>
            <person name="Monaco L."/>
            <person name="Palma E."/>
            <person name="Grassi F."/>
            <person name="Miledi R."/>
            <person name="Eusebi F."/>
        </authorList>
    </citation>
    <scope>NUCLEOTIDE SEQUENCE [MRNA] OF 115-170 (ISOFORMS LONG AND SHORT)</scope>
</reference>
<proteinExistence type="evidence at transcript level"/>
<organism>
    <name type="scientific">Mus musculus</name>
    <name type="common">Mouse</name>
    <dbReference type="NCBI Taxonomy" id="10090"/>
    <lineage>
        <taxon>Eukaryota</taxon>
        <taxon>Metazoa</taxon>
        <taxon>Chordata</taxon>
        <taxon>Craniata</taxon>
        <taxon>Vertebrata</taxon>
        <taxon>Euteleostomi</taxon>
        <taxon>Mammalia</taxon>
        <taxon>Eutheria</taxon>
        <taxon>Euarchontoglires</taxon>
        <taxon>Glires</taxon>
        <taxon>Rodentia</taxon>
        <taxon>Myomorpha</taxon>
        <taxon>Muroidea</taxon>
        <taxon>Muridae</taxon>
        <taxon>Murinae</taxon>
        <taxon>Mus</taxon>
        <taxon>Mus</taxon>
    </lineage>
</organism>
<evidence type="ECO:0000250" key="1"/>
<evidence type="ECO:0000250" key="2">
    <source>
        <dbReference type="UniProtKB" id="P13536"/>
    </source>
</evidence>
<evidence type="ECO:0000255" key="3"/>
<evidence type="ECO:0000303" key="4">
    <source>
    </source>
</evidence>
<evidence type="ECO:0000305" key="5"/>
<sequence length="519" mass="58745">MQGGQRPHLLLLLLAVCLGAQSRNQEERLLADLMRNYDPHLRPAERDSDVVNVSLKLTLTNLISLNEREEALTTNVWIEMQWCDYRLRWDPKDYEGLWILRVPSTMVWRPDIVLENNVDGVFEVALYCNVLVSPDGCIYWLPPAIFRSSCSISVTYFPFDWQNCSLIFQSQTYSTSEINLQLSQEDGQAIEWIFIDPEAFTENGEWAIRHRPAKMLLDSVAPAEEAGHQKVVFYLLIQRKPLFYVINIIAPCVLISSVAILIYFLPAKAGGQKCTVATNVLLAQTVFLFLVAKKVPETSQAVPLISKYLTFLMVVTILIVVNSVVVLNVSLRSPHTHSMARGVRKLFLRLLPQLLRMHVRPLAPAAVQDARFRLQNGSSSGWPIMAREEGDLCLPRSELLFRQRQRNGLVQAVLEKLENGPEVRQSQEFCGSLKQASPAIQACVDACNLMARARRQQSHFDSGNEEWLLVGRVLDRVCFLAMLSLFICGTAGIFLMAHYNQVPDLPFPGDPRPYLPLPD</sequence>